<comment type="function">
    <text evidence="1">Catalyzes the attachment of threonine to tRNA(Thr) in a two-step reaction: L-threonine is first activated by ATP to form Thr-AMP and then transferred to the acceptor end of tRNA(Thr). Also edits incorrectly charged L-seryl-tRNA(Thr).</text>
</comment>
<comment type="catalytic activity">
    <reaction evidence="1">
        <text>tRNA(Thr) + L-threonine + ATP = L-threonyl-tRNA(Thr) + AMP + diphosphate + H(+)</text>
        <dbReference type="Rhea" id="RHEA:24624"/>
        <dbReference type="Rhea" id="RHEA-COMP:9670"/>
        <dbReference type="Rhea" id="RHEA-COMP:9704"/>
        <dbReference type="ChEBI" id="CHEBI:15378"/>
        <dbReference type="ChEBI" id="CHEBI:30616"/>
        <dbReference type="ChEBI" id="CHEBI:33019"/>
        <dbReference type="ChEBI" id="CHEBI:57926"/>
        <dbReference type="ChEBI" id="CHEBI:78442"/>
        <dbReference type="ChEBI" id="CHEBI:78534"/>
        <dbReference type="ChEBI" id="CHEBI:456215"/>
        <dbReference type="EC" id="6.1.1.3"/>
    </reaction>
</comment>
<comment type="cofactor">
    <cofactor evidence="1">
        <name>Zn(2+)</name>
        <dbReference type="ChEBI" id="CHEBI:29105"/>
    </cofactor>
    <text evidence="1">Binds 1 zinc ion per subunit.</text>
</comment>
<comment type="subunit">
    <text evidence="1">Homodimer.</text>
</comment>
<comment type="subcellular location">
    <subcellularLocation>
        <location evidence="1">Cytoplasm</location>
    </subcellularLocation>
</comment>
<comment type="similarity">
    <text evidence="1">Belongs to the class-II aminoacyl-tRNA synthetase family.</text>
</comment>
<sequence>MINIRFPDGSIREFEAGVNSLDVAKSISPSLAKATMAAYIDDQLKDAKDAINSNCELRLITVKDPEGLEILRHSCAHLLAHAVKELYPNTEVTIGPVVDNGFYYDFSFKESIGEADLPTIEKKMKELAKKSAPISYRVVPKAEAIEFFKAQGENYKVEIIDSIADEQMKIYTQDNFSDLCRGPHIPNTSVLKAFKLTKLAGAYWRGNSDNEMLTRIYGTCWATKEDLEQYLNMLEEAEKRDHRKIGKVLDLFHFQEDSPGIAFWHDNGVRIWRQVEDYMRASNNKYGCSEIRTPLIADFSLWQKSGHASKYAENMFATKSENRDFAIRPMNCPTCVQVYNTKLHSYRDLPIRMAEFGIVHRNEPSGSLHGLLRVRSFTQDDGHIFCTPEQVEEEVILMVQQCFEVYKDFGFNDFAVKIALRPENRIGDDETWDKSEQMLKNALDANNVSYELLPGEGAFYGPKIEFHLKDAIGRSWQCGTIQLDFSMPQRLGATYIDKNGEKQVPVMLHRAIVGSLERFIGMLIEHYAGNLPLWLAPVQVAVMGISNNQDDYCKEVFIMLEKNGIRAKLDLRNEKIGFKIREHTLLRVPYLVILGKNEQEQKIITIRKHSGEDLGQMSVDDFCAFLDKQIQAKE</sequence>
<organism>
    <name type="scientific">Francisella tularensis subsp. tularensis (strain FSC 198)</name>
    <dbReference type="NCBI Taxonomy" id="393115"/>
    <lineage>
        <taxon>Bacteria</taxon>
        <taxon>Pseudomonadati</taxon>
        <taxon>Pseudomonadota</taxon>
        <taxon>Gammaproteobacteria</taxon>
        <taxon>Thiotrichales</taxon>
        <taxon>Francisellaceae</taxon>
        <taxon>Francisella</taxon>
    </lineage>
</organism>
<evidence type="ECO:0000255" key="1">
    <source>
        <dbReference type="HAMAP-Rule" id="MF_00184"/>
    </source>
</evidence>
<evidence type="ECO:0000255" key="2">
    <source>
        <dbReference type="PROSITE-ProRule" id="PRU01228"/>
    </source>
</evidence>
<feature type="chain" id="PRO_1000020390" description="Threonine--tRNA ligase">
    <location>
        <begin position="1"/>
        <end position="634"/>
    </location>
</feature>
<feature type="domain" description="TGS" evidence="2">
    <location>
        <begin position="1"/>
        <end position="61"/>
    </location>
</feature>
<feature type="region of interest" description="Catalytic" evidence="1">
    <location>
        <begin position="241"/>
        <end position="532"/>
    </location>
</feature>
<feature type="binding site" evidence="1">
    <location>
        <position position="332"/>
    </location>
    <ligand>
        <name>Zn(2+)</name>
        <dbReference type="ChEBI" id="CHEBI:29105"/>
    </ligand>
</feature>
<feature type="binding site" evidence="1">
    <location>
        <position position="383"/>
    </location>
    <ligand>
        <name>Zn(2+)</name>
        <dbReference type="ChEBI" id="CHEBI:29105"/>
    </ligand>
</feature>
<feature type="binding site" evidence="1">
    <location>
        <position position="509"/>
    </location>
    <ligand>
        <name>Zn(2+)</name>
        <dbReference type="ChEBI" id="CHEBI:29105"/>
    </ligand>
</feature>
<keyword id="KW-0030">Aminoacyl-tRNA synthetase</keyword>
<keyword id="KW-0067">ATP-binding</keyword>
<keyword id="KW-0963">Cytoplasm</keyword>
<keyword id="KW-0436">Ligase</keyword>
<keyword id="KW-0479">Metal-binding</keyword>
<keyword id="KW-0547">Nucleotide-binding</keyword>
<keyword id="KW-0648">Protein biosynthesis</keyword>
<keyword id="KW-0694">RNA-binding</keyword>
<keyword id="KW-0820">tRNA-binding</keyword>
<keyword id="KW-0862">Zinc</keyword>
<dbReference type="EC" id="6.1.1.3" evidence="1"/>
<dbReference type="EMBL" id="AM286280">
    <property type="protein sequence ID" value="CAL08833.1"/>
    <property type="molecule type" value="Genomic_DNA"/>
</dbReference>
<dbReference type="RefSeq" id="WP_003020750.1">
    <property type="nucleotide sequence ID" value="NC_008245.1"/>
</dbReference>
<dbReference type="SMR" id="Q14I20"/>
<dbReference type="KEGG" id="ftf:FTF0817"/>
<dbReference type="HOGENOM" id="CLU_008554_0_1_6"/>
<dbReference type="GO" id="GO:0005737">
    <property type="term" value="C:cytoplasm"/>
    <property type="evidence" value="ECO:0007669"/>
    <property type="project" value="UniProtKB-SubCell"/>
</dbReference>
<dbReference type="GO" id="GO:0005524">
    <property type="term" value="F:ATP binding"/>
    <property type="evidence" value="ECO:0007669"/>
    <property type="project" value="UniProtKB-UniRule"/>
</dbReference>
<dbReference type="GO" id="GO:0046872">
    <property type="term" value="F:metal ion binding"/>
    <property type="evidence" value="ECO:0007669"/>
    <property type="project" value="UniProtKB-KW"/>
</dbReference>
<dbReference type="GO" id="GO:0004829">
    <property type="term" value="F:threonine-tRNA ligase activity"/>
    <property type="evidence" value="ECO:0007669"/>
    <property type="project" value="UniProtKB-UniRule"/>
</dbReference>
<dbReference type="GO" id="GO:0000049">
    <property type="term" value="F:tRNA binding"/>
    <property type="evidence" value="ECO:0007669"/>
    <property type="project" value="UniProtKB-KW"/>
</dbReference>
<dbReference type="GO" id="GO:0006435">
    <property type="term" value="P:threonyl-tRNA aminoacylation"/>
    <property type="evidence" value="ECO:0007669"/>
    <property type="project" value="UniProtKB-UniRule"/>
</dbReference>
<dbReference type="CDD" id="cd01667">
    <property type="entry name" value="TGS_ThrRS"/>
    <property type="match status" value="1"/>
</dbReference>
<dbReference type="CDD" id="cd00860">
    <property type="entry name" value="ThrRS_anticodon"/>
    <property type="match status" value="1"/>
</dbReference>
<dbReference type="CDD" id="cd00771">
    <property type="entry name" value="ThrRS_core"/>
    <property type="match status" value="1"/>
</dbReference>
<dbReference type="FunFam" id="3.10.20.30:FF:000005">
    <property type="entry name" value="Threonine--tRNA ligase"/>
    <property type="match status" value="1"/>
</dbReference>
<dbReference type="FunFam" id="3.30.54.20:FF:000002">
    <property type="entry name" value="Threonine--tRNA ligase"/>
    <property type="match status" value="1"/>
</dbReference>
<dbReference type="FunFam" id="3.30.930.10:FF:000002">
    <property type="entry name" value="Threonine--tRNA ligase"/>
    <property type="match status" value="1"/>
</dbReference>
<dbReference type="FunFam" id="3.40.50.800:FF:000001">
    <property type="entry name" value="Threonine--tRNA ligase"/>
    <property type="match status" value="1"/>
</dbReference>
<dbReference type="FunFam" id="3.30.980.10:FF:000005">
    <property type="entry name" value="Threonyl-tRNA synthetase, mitochondrial"/>
    <property type="match status" value="1"/>
</dbReference>
<dbReference type="Gene3D" id="3.10.20.30">
    <property type="match status" value="1"/>
</dbReference>
<dbReference type="Gene3D" id="3.30.54.20">
    <property type="match status" value="1"/>
</dbReference>
<dbReference type="Gene3D" id="3.40.50.800">
    <property type="entry name" value="Anticodon-binding domain"/>
    <property type="match status" value="1"/>
</dbReference>
<dbReference type="Gene3D" id="3.30.930.10">
    <property type="entry name" value="Bira Bifunctional Protein, Domain 2"/>
    <property type="match status" value="1"/>
</dbReference>
<dbReference type="Gene3D" id="3.30.980.10">
    <property type="entry name" value="Threonyl-trna Synthetase, Chain A, domain 2"/>
    <property type="match status" value="1"/>
</dbReference>
<dbReference type="HAMAP" id="MF_00184">
    <property type="entry name" value="Thr_tRNA_synth"/>
    <property type="match status" value="1"/>
</dbReference>
<dbReference type="InterPro" id="IPR002314">
    <property type="entry name" value="aa-tRNA-synt_IIb"/>
</dbReference>
<dbReference type="InterPro" id="IPR006195">
    <property type="entry name" value="aa-tRNA-synth_II"/>
</dbReference>
<dbReference type="InterPro" id="IPR045864">
    <property type="entry name" value="aa-tRNA-synth_II/BPL/LPL"/>
</dbReference>
<dbReference type="InterPro" id="IPR004154">
    <property type="entry name" value="Anticodon-bd"/>
</dbReference>
<dbReference type="InterPro" id="IPR036621">
    <property type="entry name" value="Anticodon-bd_dom_sf"/>
</dbReference>
<dbReference type="InterPro" id="IPR012675">
    <property type="entry name" value="Beta-grasp_dom_sf"/>
</dbReference>
<dbReference type="InterPro" id="IPR004095">
    <property type="entry name" value="TGS"/>
</dbReference>
<dbReference type="InterPro" id="IPR012676">
    <property type="entry name" value="TGS-like"/>
</dbReference>
<dbReference type="InterPro" id="IPR002320">
    <property type="entry name" value="Thr-tRNA-ligase_IIa"/>
</dbReference>
<dbReference type="InterPro" id="IPR018163">
    <property type="entry name" value="Thr/Ala-tRNA-synth_IIc_edit"/>
</dbReference>
<dbReference type="InterPro" id="IPR047246">
    <property type="entry name" value="ThrRS_anticodon"/>
</dbReference>
<dbReference type="InterPro" id="IPR033728">
    <property type="entry name" value="ThrRS_core"/>
</dbReference>
<dbReference type="InterPro" id="IPR012947">
    <property type="entry name" value="tRNA_SAD"/>
</dbReference>
<dbReference type="NCBIfam" id="TIGR00418">
    <property type="entry name" value="thrS"/>
    <property type="match status" value="1"/>
</dbReference>
<dbReference type="PANTHER" id="PTHR11451:SF44">
    <property type="entry name" value="THREONINE--TRNA LIGASE, CHLOROPLASTIC_MITOCHONDRIAL 2"/>
    <property type="match status" value="1"/>
</dbReference>
<dbReference type="PANTHER" id="PTHR11451">
    <property type="entry name" value="THREONINE-TRNA LIGASE"/>
    <property type="match status" value="1"/>
</dbReference>
<dbReference type="Pfam" id="PF03129">
    <property type="entry name" value="HGTP_anticodon"/>
    <property type="match status" value="1"/>
</dbReference>
<dbReference type="Pfam" id="PF02824">
    <property type="entry name" value="TGS"/>
    <property type="match status" value="1"/>
</dbReference>
<dbReference type="Pfam" id="PF00587">
    <property type="entry name" value="tRNA-synt_2b"/>
    <property type="match status" value="1"/>
</dbReference>
<dbReference type="Pfam" id="PF07973">
    <property type="entry name" value="tRNA_SAD"/>
    <property type="match status" value="1"/>
</dbReference>
<dbReference type="PRINTS" id="PR01047">
    <property type="entry name" value="TRNASYNTHTHR"/>
</dbReference>
<dbReference type="SMART" id="SM00863">
    <property type="entry name" value="tRNA_SAD"/>
    <property type="match status" value="1"/>
</dbReference>
<dbReference type="SUPFAM" id="SSF52954">
    <property type="entry name" value="Class II aaRS ABD-related"/>
    <property type="match status" value="1"/>
</dbReference>
<dbReference type="SUPFAM" id="SSF55681">
    <property type="entry name" value="Class II aaRS and biotin synthetases"/>
    <property type="match status" value="1"/>
</dbReference>
<dbReference type="SUPFAM" id="SSF81271">
    <property type="entry name" value="TGS-like"/>
    <property type="match status" value="1"/>
</dbReference>
<dbReference type="SUPFAM" id="SSF55186">
    <property type="entry name" value="ThrRS/AlaRS common domain"/>
    <property type="match status" value="1"/>
</dbReference>
<dbReference type="PROSITE" id="PS50862">
    <property type="entry name" value="AA_TRNA_LIGASE_II"/>
    <property type="match status" value="1"/>
</dbReference>
<dbReference type="PROSITE" id="PS51880">
    <property type="entry name" value="TGS"/>
    <property type="match status" value="1"/>
</dbReference>
<gene>
    <name evidence="1" type="primary">thrS</name>
    <name type="ordered locus">FTF0817</name>
</gene>
<accession>Q14I20</accession>
<name>SYT_FRAT1</name>
<reference key="1">
    <citation type="journal article" date="2007" name="PLoS ONE">
        <title>Genome sequencing shows that European isolates of Francisella tularensis subspecies tularensis are almost identical to US laboratory strain Schu S4.</title>
        <authorList>
            <person name="Chaudhuri R.R."/>
            <person name="Ren C.-P."/>
            <person name="Desmond L."/>
            <person name="Vincent G.A."/>
            <person name="Silman N.J."/>
            <person name="Brehm J.K."/>
            <person name="Elmore M.J."/>
            <person name="Hudson M.J."/>
            <person name="Forsman M."/>
            <person name="Isherwood K.E."/>
            <person name="Gurycova D."/>
            <person name="Minton N.P."/>
            <person name="Titball R.W."/>
            <person name="Pallen M.J."/>
            <person name="Vipond R."/>
        </authorList>
    </citation>
    <scope>NUCLEOTIDE SEQUENCE [LARGE SCALE GENOMIC DNA]</scope>
    <source>
        <strain>FSC 198</strain>
    </source>
</reference>
<proteinExistence type="inferred from homology"/>
<protein>
    <recommendedName>
        <fullName evidence="1">Threonine--tRNA ligase</fullName>
        <ecNumber evidence="1">6.1.1.3</ecNumber>
    </recommendedName>
    <alternativeName>
        <fullName evidence="1">Threonyl-tRNA synthetase</fullName>
        <shortName evidence="1">ThrRS</shortName>
    </alternativeName>
</protein>